<sequence length="1470" mass="170301">MFVKNFIHKLKELKQKSLDKFANLLYDYGGYVYDRPCTFIICSLICCLLLTCGFYFKEHEKDIYKLYSISNSYAYETNETINDFFYKSRRCFILVESNVNLLKPKILRELQKFEEGTKDIEVDLSEINECKTNSELPPEQSHVAKELYKTLIQRSEENLKSGKINGSLFDYSDLDENGKSVLSLAGKENNDDTLIEGDNKNDEETSANNNNNEDDNNEDDNNEDDNNEDDNNENDNNNNNEDDNNNDDDDDEDNEEEDEEKQKSLREKLYRKIYEMLKKKKENIVLDENNPNVNFTDYKDDVFYPYQYIPPMLIKADRCKLQNVFGDKNLNIDLREASDGLKKQITYTLEDICEKKYGDCNFSSLFLYYEKGNGYIDYPIKVDNLDFYVNRRTYKEMMFKGILGNMVYEKSGSKYIIKSANAIMTVIPLLNSHTYEPYALAYEKKLIDYVRFYNLDDIIQDEETNDDNDPFIRFHVFTDRSLEDEVDRISKIDNLTRLLLLIGVLLIFMYALFNNVTSVLYRSKPLCAVMGIFCGFLGFLSGSGFLYFLGVKSVPPAETVPFLVIGVGVDDVFVILNSYSLLFMVKDNKKRIQMCLKDSALAITVTTLTNIIAFLISAISPFYSICAFSLFTASSLFFGYLMVLTFLLSFLCIEAKLEKKKRNIFTGTFHLFRSIFMKSSKKNKKENKENNIHDDGDNDNDEKKKDLSLEVKNNEDDYENISIYEWIHNLYLFEESINKKKKNAALVYASNNGMSSNLNNVNEDGFPNPSKIVSMEDVKKRNIKKDDAYINKEDEEGGGYYNKDDNKKKDILGKKQKKNNNNVTLVSKKGEDNELDVYYENLDEKTNDKYKMNNIKSSKLKYDNDKKDGAIINNRPSSDEEYKEEKDKNKINILNDVFNDITIKPNENILLDRGDVIKSSGYDSSYNDLQSSSLPNPSSNEVLNKTTMVYNETDLKDNKKEIKSSKKNVKDIKKSDMIHDDTYDIINSNNKNILLSSNEINNNSNNTNKFNNNSTELATKDTQQFINGHDKNIYLLSSHDNALFYKYIYEEPKGNIGKYFRSLVKNYYVPFLSSRFGKTIVYIMFTIIIAMSIYGCTLMKKGIKYDKAFPVDSYVRRFTTAKIKYFPDFGDFIEVYYFDKHFINKYRGLEKNTKEAASSFLYSDLTDRQIMNSPKINKNVHWENTNLQEELINMHNTLESQEFVTSVANGFTFFLNKNKSSLRKENPQEFYEIFANWLKKDFVGNLFKNDFVFLNGKLVAWRFHYFQKNVDDSEISSKWLKACKQITKLENHNVQMVCFHLSSIFNETDESIIEVTLINLGITILTILVVTAYIIKGFYSCVIIALIIFLIDLCIFGFMCLCGITMNIISMVILVLSVGFSIDHTSHIVQAFSHSMGRTRDEKMKESLHLMIGPVLHSGLSTWFVISTLFFSNKDFTVIFFQTLSLVLFFSITFSSMFLPVLLSSFGPLH</sequence>
<comment type="function">
    <text evidence="4 5">Facilitates cholesterol efflux from membranes in a pH-dependent manner (PubMed:39693420). Required for maintaining normal parasite plasma membrane lipid composition (PubMed:30888318). Required for the proper functioning of digestive vacuole (PubMed:30888318). Required for the viability of blood-stage parasites (PubMed:30888318).</text>
</comment>
<comment type="catalytic activity">
    <reaction evidence="5">
        <text>cholesterol(in) = cholesterol(out)</text>
        <dbReference type="Rhea" id="RHEA:39747"/>
        <dbReference type="ChEBI" id="CHEBI:16113"/>
    </reaction>
</comment>
<comment type="biophysicochemical properties">
    <phDependence>
        <text evidence="5">Optimum pH is 7.0 (PubMed:39693420). Inactive at pH 7.4 and 8.0 (PubMed:39693420).</text>
    </phDependence>
</comment>
<comment type="subcellular location">
    <subcellularLocation>
        <location evidence="4 5">Cell membrane</location>
        <topology evidence="1">Multi-pass membrane protein</topology>
    </subcellularLocation>
</comment>
<comment type="disruption phenotype">
    <text evidence="4">Repeated attempts to generate a knockout failed (PubMed:30888318). Conditional knockdown results in decreased parasite fitness during asexual stages (PubMed:30888318). Increased sensitivity to saponin, a cholesterol-binding compound capable of penetrating membranes (PubMed:30888318). Impaired digestive vacuole morphology (PubMed:30888318).</text>
</comment>
<comment type="miscellaneous">
    <text evidence="4">Mutations in the protein confer resistance to three diverse compounds: MMV009108, MMV028038 and MMV019662.</text>
</comment>
<comment type="similarity">
    <text evidence="8">Belongs to the patched family.</text>
</comment>
<dbReference type="EMBL" id="AL844501">
    <property type="protein sequence ID" value="CAD49035.1"/>
    <property type="molecule type" value="Genomic_DNA"/>
</dbReference>
<dbReference type="RefSeq" id="XP_001351007.1">
    <property type="nucleotide sequence ID" value="XM_001350971.1"/>
</dbReference>
<dbReference type="PDB" id="8V0G">
    <property type="method" value="EM"/>
    <property type="resolution" value="3.11 A"/>
    <property type="chains" value="A=1-1470"/>
</dbReference>
<dbReference type="PDB" id="8V12">
    <property type="method" value="EM"/>
    <property type="resolution" value="3.81 A"/>
    <property type="chains" value="A=1-1470"/>
</dbReference>
<dbReference type="PDB" id="8V1G">
    <property type="method" value="EM"/>
    <property type="resolution" value="2.98 A"/>
    <property type="chains" value="A=1-1470"/>
</dbReference>
<dbReference type="PDBsum" id="8V0G"/>
<dbReference type="PDBsum" id="8V12"/>
<dbReference type="PDBsum" id="8V1G"/>
<dbReference type="EMDB" id="EMD-42854"/>
<dbReference type="EMDB" id="EMD-42878"/>
<dbReference type="EMDB" id="EMD-42885"/>
<dbReference type="SMR" id="Q8I266"/>
<dbReference type="IntAct" id="Q8I266">
    <property type="interactions" value="5"/>
</dbReference>
<dbReference type="STRING" id="36329.Q8I266"/>
<dbReference type="GuidetoPHARMACOLOGY" id="3107"/>
<dbReference type="SwissPalm" id="Q8I266"/>
<dbReference type="PaxDb" id="5833-PFA0375c"/>
<dbReference type="EnsemblProtists" id="CAD49035">
    <property type="protein sequence ID" value="CAD49035"/>
    <property type="gene ID" value="PF3D7_0107500"/>
</dbReference>
<dbReference type="GeneID" id="813212"/>
<dbReference type="KEGG" id="pfa:PF3D7_0107500"/>
<dbReference type="VEuPathDB" id="PlasmoDB:PF3D7_0107500"/>
<dbReference type="HOGENOM" id="CLU_252789_0_0_1"/>
<dbReference type="InParanoid" id="Q8I266"/>
<dbReference type="OMA" id="KPLCAVM"/>
<dbReference type="OrthoDB" id="6510177at2759"/>
<dbReference type="PhylomeDB" id="Q8I266"/>
<dbReference type="Proteomes" id="UP000001450">
    <property type="component" value="Chromosome 1"/>
</dbReference>
<dbReference type="GO" id="GO:0016020">
    <property type="term" value="C:membrane"/>
    <property type="evidence" value="ECO:0000318"/>
    <property type="project" value="GO_Central"/>
</dbReference>
<dbReference type="Gene3D" id="1.20.1640.10">
    <property type="entry name" value="Multidrug efflux transporter AcrB transmembrane domain"/>
    <property type="match status" value="2"/>
</dbReference>
<dbReference type="InterPro" id="IPR051697">
    <property type="entry name" value="Patched_domain-protein"/>
</dbReference>
<dbReference type="InterPro" id="IPR003392">
    <property type="entry name" value="PTHD_SSD"/>
</dbReference>
<dbReference type="InterPro" id="IPR000731">
    <property type="entry name" value="SSD"/>
</dbReference>
<dbReference type="PANTHER" id="PTHR10796">
    <property type="entry name" value="PATCHED-RELATED"/>
    <property type="match status" value="1"/>
</dbReference>
<dbReference type="PANTHER" id="PTHR10796:SF92">
    <property type="entry name" value="PATCHED-RELATED, ISOFORM A"/>
    <property type="match status" value="1"/>
</dbReference>
<dbReference type="Pfam" id="PF02460">
    <property type="entry name" value="Patched"/>
    <property type="match status" value="1"/>
</dbReference>
<dbReference type="SUPFAM" id="SSF82866">
    <property type="entry name" value="Multidrug efflux transporter AcrB transmembrane domain"/>
    <property type="match status" value="2"/>
</dbReference>
<dbReference type="PROSITE" id="PS50156">
    <property type="entry name" value="SSD"/>
    <property type="match status" value="1"/>
</dbReference>
<evidence type="ECO:0000255" key="1"/>
<evidence type="ECO:0000255" key="2">
    <source>
        <dbReference type="PROSITE-ProRule" id="PRU00199"/>
    </source>
</evidence>
<evidence type="ECO:0000255" key="3">
    <source>
        <dbReference type="PROSITE-ProRule" id="PRU00498"/>
    </source>
</evidence>
<evidence type="ECO:0000269" key="4">
    <source>
    </source>
</evidence>
<evidence type="ECO:0000269" key="5">
    <source>
    </source>
</evidence>
<evidence type="ECO:0000303" key="6">
    <source>
    </source>
</evidence>
<evidence type="ECO:0000303" key="7">
    <source>
    </source>
</evidence>
<evidence type="ECO:0000305" key="8"/>
<evidence type="ECO:0000312" key="9">
    <source>
        <dbReference type="EMBL" id="CAD49035.1"/>
    </source>
</evidence>
<evidence type="ECO:0000312" key="10">
    <source>
        <dbReference type="Proteomes" id="UP000001450"/>
    </source>
</evidence>
<evidence type="ECO:0007744" key="11">
    <source>
        <dbReference type="PDB" id="8V0G"/>
    </source>
</evidence>
<evidence type="ECO:0007744" key="12">
    <source>
        <dbReference type="PDB" id="8V12"/>
    </source>
</evidence>
<evidence type="ECO:0007744" key="13">
    <source>
        <dbReference type="PDB" id="8V1G"/>
    </source>
</evidence>
<organism evidence="10">
    <name type="scientific">Plasmodium falciparum (isolate 3D7)</name>
    <dbReference type="NCBI Taxonomy" id="36329"/>
    <lineage>
        <taxon>Eukaryota</taxon>
        <taxon>Sar</taxon>
        <taxon>Alveolata</taxon>
        <taxon>Apicomplexa</taxon>
        <taxon>Aconoidasida</taxon>
        <taxon>Haemosporida</taxon>
        <taxon>Plasmodiidae</taxon>
        <taxon>Plasmodium</taxon>
        <taxon>Plasmodium (Laverania)</taxon>
    </lineage>
</organism>
<reference evidence="10" key="1">
    <citation type="journal article" date="2002" name="Nature">
        <title>Genome sequence of the human malaria parasite Plasmodium falciparum.</title>
        <authorList>
            <person name="Gardner M.J."/>
            <person name="Hall N."/>
            <person name="Fung E."/>
            <person name="White O."/>
            <person name="Berriman M."/>
            <person name="Hyman R.W."/>
            <person name="Carlton J.M."/>
            <person name="Pain A."/>
            <person name="Nelson K.E."/>
            <person name="Bowman S."/>
            <person name="Paulsen I.T."/>
            <person name="James K.D."/>
            <person name="Eisen J.A."/>
            <person name="Rutherford K.M."/>
            <person name="Salzberg S.L."/>
            <person name="Craig A."/>
            <person name="Kyes S."/>
            <person name="Chan M.-S."/>
            <person name="Nene V."/>
            <person name="Shallom S.J."/>
            <person name="Suh B."/>
            <person name="Peterson J."/>
            <person name="Angiuoli S."/>
            <person name="Pertea M."/>
            <person name="Allen J."/>
            <person name="Selengut J."/>
            <person name="Haft D."/>
            <person name="Mather M.W."/>
            <person name="Vaidya A.B."/>
            <person name="Martin D.M.A."/>
            <person name="Fairlamb A.H."/>
            <person name="Fraunholz M.J."/>
            <person name="Roos D.S."/>
            <person name="Ralph S.A."/>
            <person name="McFadden G.I."/>
            <person name="Cummings L.M."/>
            <person name="Subramanian G.M."/>
            <person name="Mungall C."/>
            <person name="Venter J.C."/>
            <person name="Carucci D.J."/>
            <person name="Hoffman S.L."/>
            <person name="Newbold C."/>
            <person name="Davis R.W."/>
            <person name="Fraser C.M."/>
            <person name="Barrell B.G."/>
        </authorList>
    </citation>
    <scope>NUCLEOTIDE SEQUENCE [LARGE SCALE GENOMIC DNA]</scope>
    <source>
        <strain evidence="10">3D7</strain>
    </source>
</reference>
<reference evidence="10" key="2">
    <citation type="journal article" date="2002" name="Nature">
        <title>Sequence of Plasmodium falciparum chromosomes 1, 3-9 and 13.</title>
        <authorList>
            <person name="Hall N."/>
            <person name="Pain A."/>
            <person name="Berriman M."/>
            <person name="Churcher C.M."/>
            <person name="Harris B."/>
            <person name="Harris D."/>
            <person name="Mungall K.L."/>
            <person name="Bowman S."/>
            <person name="Atkin R."/>
            <person name="Baker S."/>
            <person name="Barron A."/>
            <person name="Brooks K."/>
            <person name="Buckee C.O."/>
            <person name="Burrows C."/>
            <person name="Cherevach I."/>
            <person name="Chillingworth C."/>
            <person name="Chillingworth T."/>
            <person name="Christodoulou Z."/>
            <person name="Clark L."/>
            <person name="Clark R."/>
            <person name="Corton C."/>
            <person name="Cronin A."/>
            <person name="Davies R.M."/>
            <person name="Davis P."/>
            <person name="Dear P."/>
            <person name="Dearden F."/>
            <person name="Doggett J."/>
            <person name="Feltwell T."/>
            <person name="Goble A."/>
            <person name="Goodhead I."/>
            <person name="Gwilliam R."/>
            <person name="Hamlin N."/>
            <person name="Hance Z."/>
            <person name="Harper D."/>
            <person name="Hauser H."/>
            <person name="Hornsby T."/>
            <person name="Holroyd S."/>
            <person name="Horrocks P."/>
            <person name="Humphray S."/>
            <person name="Jagels K."/>
            <person name="James K.D."/>
            <person name="Johnson D."/>
            <person name="Kerhornou A."/>
            <person name="Knights A."/>
            <person name="Konfortov B."/>
            <person name="Kyes S."/>
            <person name="Larke N."/>
            <person name="Lawson D."/>
            <person name="Lennard N."/>
            <person name="Line A."/>
            <person name="Maddison M."/>
            <person name="Mclean J."/>
            <person name="Mooney P."/>
            <person name="Moule S."/>
            <person name="Murphy L."/>
            <person name="Oliver K."/>
            <person name="Ormond D."/>
            <person name="Price C."/>
            <person name="Quail M.A."/>
            <person name="Rabbinowitsch E."/>
            <person name="Rajandream M.A."/>
            <person name="Rutter S."/>
            <person name="Rutherford K.M."/>
            <person name="Sanders M."/>
            <person name="Simmonds M."/>
            <person name="Seeger K."/>
            <person name="Sharp S."/>
            <person name="Smith R."/>
            <person name="Squares R."/>
            <person name="Squares S."/>
            <person name="Stevens K."/>
            <person name="Taylor K."/>
            <person name="Tivey A."/>
            <person name="Unwin L."/>
            <person name="Whitehead S."/>
            <person name="Woodward J.R."/>
            <person name="Sulston J.E."/>
            <person name="Craig A."/>
            <person name="Newbold C."/>
            <person name="Barrell B.G."/>
        </authorList>
    </citation>
    <scope>NUCLEOTIDE SEQUENCE [LARGE SCALE GENOMIC DNA]</scope>
    <source>
        <strain evidence="10">3D7</strain>
    </source>
</reference>
<reference evidence="8" key="3">
    <citation type="journal article" date="2019" name="Elife">
        <title>Plasmodium Niemann-Pick type C1-related protein is a druggable target required for parasite membrane homeostasis.</title>
        <authorList>
            <person name="Istvan E.S."/>
            <person name="Das S."/>
            <person name="Bhatnagar S."/>
            <person name="Beck J.R."/>
            <person name="Owen E."/>
            <person name="Llinas M."/>
            <person name="Ganesan S.M."/>
            <person name="Niles J.C."/>
            <person name="Winzeler E."/>
            <person name="Vaidya A.B."/>
            <person name="Goldberg D.E."/>
        </authorList>
    </citation>
    <scope>FUNCTION</scope>
    <scope>SUBCELLULAR LOCATION</scope>
    <scope>DISRUPTION PHENOTYPE</scope>
    <scope>MUTAGENESIS OF ALA-1108; ALA-1208 AND PHE-1436</scope>
</reference>
<reference evidence="11 12 13" key="4">
    <citation type="journal article" date="2024" name="Sci. Adv.">
        <title>The Plasmodium falciparum NCR1 transporter is an antimalarial target that exports cholesterol from the parasite's plasma membrane.</title>
        <authorList>
            <person name="Zhang Z."/>
            <person name="Lyu M."/>
            <person name="Han X."/>
            <person name="Bandara S."/>
            <person name="Cui M."/>
            <person name="Istvan E.S."/>
            <person name="Geng X."/>
            <person name="Tringides M.L."/>
            <person name="Gregor W.D."/>
            <person name="Miyagi M."/>
            <person name="Oberstaller J."/>
            <person name="Adams J.H."/>
            <person name="Zhang Y."/>
            <person name="Nieman M.T."/>
            <person name="von Lintig J."/>
            <person name="Goldberg D.E."/>
            <person name="Yu E.W."/>
        </authorList>
    </citation>
    <scope>STRUCTURE BY ELECTRON MICROSCOPY (2.98 ANGSTROMS) IN COMPLEX WITH CHOLESTEROL AND SYNTHETIC INHIBITOR MMV009108</scope>
    <scope>FUNCTION</scope>
    <scope>TRANSPORTER ACTIVITY</scope>
    <scope>BIOPHYSICOCHEMICAL PROPERTIES</scope>
    <scope>SUBCELLULAR LOCATION</scope>
    <scope>GLYCOSYLATION AT ASN-165 AND ASN-294</scope>
</reference>
<protein>
    <recommendedName>
        <fullName evidence="6 7">Niemann-Pick type C1-related protein</fullName>
        <shortName evidence="7">NCR1 transporter</shortName>
        <shortName evidence="6 7">PfNCR1</shortName>
    </recommendedName>
</protein>
<keyword id="KW-0002">3D-structure</keyword>
<keyword id="KW-1003">Cell membrane</keyword>
<keyword id="KW-0325">Glycoprotein</keyword>
<keyword id="KW-0445">Lipid transport</keyword>
<keyword id="KW-0472">Membrane</keyword>
<keyword id="KW-1185">Reference proteome</keyword>
<keyword id="KW-0812">Transmembrane</keyword>
<keyword id="KW-1133">Transmembrane helix</keyword>
<keyword id="KW-0813">Transport</keyword>
<name>NCR1_PLAF7</name>
<feature type="chain" id="PRO_0000462297" description="Niemann-Pick type C1-related protein">
    <location>
        <begin position="1"/>
        <end position="1470"/>
    </location>
</feature>
<feature type="topological domain" description="Cytoplasmic" evidence="8">
    <location>
        <begin position="1"/>
        <end position="3"/>
    </location>
</feature>
<feature type="intramembrane region" evidence="5 11 12 13">
    <location>
        <begin position="4"/>
        <end position="34"/>
    </location>
</feature>
<feature type="topological domain" description="Cytoplasmic" evidence="8">
    <location>
        <position position="35"/>
    </location>
</feature>
<feature type="transmembrane region" description="Helical" evidence="5 11 12 13">
    <location>
        <begin position="36"/>
        <end position="56"/>
    </location>
</feature>
<feature type="topological domain" description="Extracellular" evidence="8">
    <location>
        <begin position="57"/>
        <end position="493"/>
    </location>
</feature>
<feature type="transmembrane region" description="Helical" evidence="5 11 12 13">
    <location>
        <begin position="494"/>
        <end position="514"/>
    </location>
</feature>
<feature type="topological domain" description="Cytoplasmic" evidence="8">
    <location>
        <begin position="515"/>
        <end position="524"/>
    </location>
</feature>
<feature type="transmembrane region" description="Helical" evidence="5 11 12 13">
    <location>
        <begin position="525"/>
        <end position="549"/>
    </location>
</feature>
<feature type="topological domain" description="Extracellular" evidence="8">
    <location>
        <begin position="550"/>
        <end position="554"/>
    </location>
</feature>
<feature type="transmembrane region" description="Helical" evidence="5 11 12 13">
    <location>
        <begin position="555"/>
        <end position="582"/>
    </location>
</feature>
<feature type="topological domain" description="Cytoplasmic" evidence="8">
    <location>
        <begin position="583"/>
        <end position="587"/>
    </location>
</feature>
<feature type="transmembrane region" description="Helical" evidence="5 11 12 13">
    <location>
        <begin position="588"/>
        <end position="619"/>
    </location>
</feature>
<feature type="topological domain" description="Extracellular" evidence="8">
    <location>
        <begin position="620"/>
        <end position="622"/>
    </location>
</feature>
<feature type="transmembrane region" description="Helical" evidence="5 11 12 13">
    <location>
        <begin position="623"/>
        <end position="659"/>
    </location>
</feature>
<feature type="topological domain" description="Cytoplasmic" evidence="8">
    <location>
        <begin position="660"/>
        <end position="663"/>
    </location>
</feature>
<feature type="intramembrane region" evidence="5 11 12 13">
    <location>
        <begin position="664"/>
        <end position="673"/>
    </location>
</feature>
<feature type="topological domain" description="Cytoplasmic" evidence="8">
    <location>
        <begin position="674"/>
        <end position="1057"/>
    </location>
</feature>
<feature type="intramembrane region" evidence="5 11 12 13">
    <location>
        <begin position="1058"/>
        <end position="1073"/>
    </location>
</feature>
<feature type="topological domain" description="Cytoplasmic" evidence="8">
    <location>
        <position position="1074"/>
    </location>
</feature>
<feature type="transmembrane region" description="Helical" evidence="5 11 12 13">
    <location>
        <begin position="1075"/>
        <end position="1098"/>
    </location>
</feature>
<feature type="topological domain" description="Extracellular" evidence="8">
    <location>
        <begin position="1099"/>
        <end position="1300"/>
    </location>
</feature>
<feature type="transmembrane region" description="Helical" evidence="5 11 12 13">
    <location>
        <begin position="1301"/>
        <end position="1334"/>
    </location>
</feature>
<feature type="topological domain" description="Cytoplasmic" evidence="8">
    <location>
        <begin position="1335"/>
        <end position="1337"/>
    </location>
</feature>
<feature type="transmembrane region" description="Helical" evidence="5 11 12 13">
    <location>
        <begin position="1338"/>
        <end position="1361"/>
    </location>
</feature>
<feature type="topological domain" description="Extracellular" evidence="8">
    <location>
        <begin position="1362"/>
        <end position="1367"/>
    </location>
</feature>
<feature type="transmembrane region" description="Helical" evidence="5 11 12 13">
    <location>
        <begin position="1368"/>
        <end position="1394"/>
    </location>
</feature>
<feature type="topological domain" description="Cytoplasmic" evidence="8">
    <location>
        <begin position="1395"/>
        <end position="1399"/>
    </location>
</feature>
<feature type="transmembrane region" description="Helical" evidence="5 11 12 13">
    <location>
        <begin position="1400"/>
        <end position="1431"/>
    </location>
</feature>
<feature type="topological domain" description="Extracellular" evidence="8">
    <location>
        <begin position="1432"/>
        <end position="1434"/>
    </location>
</feature>
<feature type="transmembrane region" description="Helical" evidence="5 11 12 13">
    <location>
        <begin position="1435"/>
        <end position="1466"/>
    </location>
</feature>
<feature type="topological domain" description="Cytoplasmic" evidence="8">
    <location>
        <begin position="1467"/>
        <end position="1470"/>
    </location>
</feature>
<feature type="domain" description="SSD" evidence="2">
    <location>
        <begin position="494"/>
        <end position="653"/>
    </location>
</feature>
<feature type="glycosylation site" description="N-linked (GlcNAc...) asparagine" evidence="3">
    <location>
        <position position="78"/>
    </location>
</feature>
<feature type="glycosylation site" description="N-linked (GlcNAc...) asparagine" evidence="5 11 12 13">
    <location>
        <position position="165"/>
    </location>
</feature>
<feature type="glycosylation site" description="N-linked (GlcNAc...) asparagine" evidence="5 11 13">
    <location>
        <position position="294"/>
    </location>
</feature>
<feature type="glycosylation site" description="N-linked (GlcNAc...) asparagine" evidence="3">
    <location>
        <position position="361"/>
    </location>
</feature>
<feature type="glycosylation site" description="N-linked (GlcNAc...) asparagine" evidence="3">
    <location>
        <position position="1218"/>
    </location>
</feature>
<feature type="mutagenesis site" description="Increases resistance to MMV009108, MMV028038 and MMV019662." evidence="4">
    <original>A</original>
    <variation>T</variation>
    <location>
        <position position="1108"/>
    </location>
</feature>
<feature type="mutagenesis site" description="Increases resistance to MMV028038." evidence="4">
    <original>A</original>
    <variation>E</variation>
    <location>
        <position position="1208"/>
    </location>
</feature>
<feature type="mutagenesis site" description="Increases resistance to MMV009108, MMV028038 and MMV019662." evidence="4">
    <original>F</original>
    <variation>I</variation>
    <location>
        <position position="1436"/>
    </location>
</feature>
<gene>
    <name evidence="8" type="primary">NCR1</name>
    <name evidence="9" type="ORF">PF3D7_0107500</name>
</gene>
<proteinExistence type="evidence at protein level"/>
<accession>Q8I266</accession>